<proteinExistence type="evidence at protein level"/>
<feature type="chain" id="PRO_0000440037" description="Choline transporter protein 1">
    <location>
        <begin position="1"/>
        <end position="700"/>
    </location>
</feature>
<feature type="topological domain" description="Cytoplasmic" evidence="9">
    <location>
        <begin position="1"/>
        <end position="33"/>
    </location>
</feature>
<feature type="transmembrane region" description="Helical" evidence="1">
    <location>
        <begin position="34"/>
        <end position="54"/>
    </location>
</feature>
<feature type="topological domain" description="Extracellular" evidence="9">
    <location>
        <begin position="55"/>
        <end position="241"/>
    </location>
</feature>
<feature type="transmembrane region" description="Helical" evidence="1">
    <location>
        <begin position="242"/>
        <end position="262"/>
    </location>
</feature>
<feature type="topological domain" description="Cytoplasmic" evidence="9">
    <location>
        <begin position="263"/>
        <end position="264"/>
    </location>
</feature>
<feature type="transmembrane region" description="Helical" evidence="1">
    <location>
        <begin position="265"/>
        <end position="285"/>
    </location>
</feature>
<feature type="topological domain" description="Extracellular" evidence="9">
    <location>
        <begin position="286"/>
        <end position="322"/>
    </location>
</feature>
<feature type="transmembrane region" description="Helical" evidence="1">
    <location>
        <begin position="323"/>
        <end position="343"/>
    </location>
</feature>
<feature type="topological domain" description="Cytoplasmic" evidence="9">
    <location>
        <begin position="344"/>
        <end position="364"/>
    </location>
</feature>
<feature type="transmembrane region" description="Helical" evidence="1">
    <location>
        <begin position="365"/>
        <end position="385"/>
    </location>
</feature>
<feature type="topological domain" description="Extracellular" evidence="9">
    <location>
        <begin position="386"/>
        <end position="432"/>
    </location>
</feature>
<feature type="transmembrane region" description="Helical" evidence="1">
    <location>
        <begin position="433"/>
        <end position="453"/>
    </location>
</feature>
<feature type="topological domain" description="Cytoplasmic" evidence="9">
    <location>
        <begin position="454"/>
        <end position="493"/>
    </location>
</feature>
<feature type="transmembrane region" description="Helical" evidence="1">
    <location>
        <begin position="494"/>
        <end position="514"/>
    </location>
</feature>
<feature type="topological domain" description="Extracellular" evidence="9">
    <location>
        <begin position="515"/>
        <end position="595"/>
    </location>
</feature>
<feature type="transmembrane region" description="Helical" evidence="1">
    <location>
        <begin position="596"/>
        <end position="616"/>
    </location>
</feature>
<feature type="topological domain" description="Cytoplasmic" evidence="9">
    <location>
        <begin position="617"/>
        <end position="633"/>
    </location>
</feature>
<feature type="transmembrane region" description="Helical" evidence="1">
    <location>
        <begin position="634"/>
        <end position="654"/>
    </location>
</feature>
<feature type="topological domain" description="Extracellular" evidence="9">
    <location>
        <begin position="655"/>
        <end position="700"/>
    </location>
</feature>
<feature type="glycosylation site" description="N-linked (GlcNAc...) asparagine" evidence="2">
    <location>
        <position position="163"/>
    </location>
</feature>
<feature type="glycosylation site" description="N-linked (GlcNAc...) asparagine" evidence="2">
    <location>
        <position position="194"/>
    </location>
</feature>
<feature type="glycosylation site" description="N-linked (GlcNAc...) asparagine" evidence="2">
    <location>
        <position position="403"/>
    </location>
</feature>
<feature type="mutagenesis site" description="In cher1-5 and sic1; impaired secondary plasmodesmata (PD) formation (e.g. blocked or shrunken) and development leading to starch and soluble sugars excess accumulation, abnormal cell-to-cell communication, and stunted growth. Altered PD localization of the luteoviral movement protein MP17. Abnormal subcellular localization. Increased leaf concentrations of sodium (Na), lithium (Li), boron (B) ions, and decreased leaf concentrations of phosphorus (P), potassium (K), calcium (Ca), cobalt (Co), nickel (Ni), and copper (Cu), manganese (Mn), iron (Fe), zinc (Zn) and molybdenum (Mo) ions." evidence="4 6">
    <original>G</original>
    <variation>E</variation>
    <location>
        <position position="247"/>
    </location>
</feature>
<keyword id="KW-1003">Cell membrane</keyword>
<keyword id="KW-0963">Cytoplasm</keyword>
<keyword id="KW-0206">Cytoskeleton</keyword>
<keyword id="KW-0217">Developmental protein</keyword>
<keyword id="KW-0254">Endocytosis</keyword>
<keyword id="KW-0967">Endosome</keyword>
<keyword id="KW-0325">Glycoprotein</keyword>
<keyword id="KW-0333">Golgi apparatus</keyword>
<keyword id="KW-0472">Membrane</keyword>
<keyword id="KW-0653">Protein transport</keyword>
<keyword id="KW-1185">Reference proteome</keyword>
<keyword id="KW-0812">Transmembrane</keyword>
<keyword id="KW-1133">Transmembrane helix</keyword>
<keyword id="KW-0813">Transport</keyword>
<gene>
    <name evidence="7" type="primary">CHER1</name>
    <name evidence="7" type="synonym">CTL1</name>
    <name evidence="8" type="synonym">SIC1</name>
    <name evidence="10" type="ordered locus">At3g15380</name>
    <name evidence="11" type="ORF">MJK13.4</name>
</gene>
<organism>
    <name type="scientific">Arabidopsis thaliana</name>
    <name type="common">Mouse-ear cress</name>
    <dbReference type="NCBI Taxonomy" id="3702"/>
    <lineage>
        <taxon>Eukaryota</taxon>
        <taxon>Viridiplantae</taxon>
        <taxon>Streptophyta</taxon>
        <taxon>Embryophyta</taxon>
        <taxon>Tracheophyta</taxon>
        <taxon>Spermatophyta</taxon>
        <taxon>Magnoliopsida</taxon>
        <taxon>eudicotyledons</taxon>
        <taxon>Gunneridae</taxon>
        <taxon>Pentapetalae</taxon>
        <taxon>rosids</taxon>
        <taxon>malvids</taxon>
        <taxon>Brassicales</taxon>
        <taxon>Brassicaceae</taxon>
        <taxon>Camelineae</taxon>
        <taxon>Arabidopsis</taxon>
    </lineage>
</organism>
<sequence length="700" mass="78737">MRGPLGAVIGRYTSSDGSAPNDGIIKHNRKCRDITFLIIFIAFWVSMIVNSSFGFNQGNPLRLTYGLDYEGNVCGSKHRHRDLTQLELRYWLNPNQVYESGLKDGELKLANARTICLLDCPAPSDDTLNWVCDYPDGEIRLKMNDWIDRNYDYFEFLTPEMRNSSLQLQGPCYPVIFPSVNVYWSCQYIARASNSSLRHWQQMGGVNIQEDMIIDKSIRRSMNSRASVLKRYVADIGKSWPVLIVCGGLVPLFLSIIWLLLIRHFVAAMPWITVVLFNMLLISVTVFYYLKAGWIGNDAVTPIIGEHDPYFHVYGRELTHVRGVAILMTFISVVAILTSIAIIRRILMATSVLKVAAKVIGEVQALIIFPAIPFAMLAIFYMFWISAALHLFSSGQVVQNNCNNTNCCAYDLVLKKVNCDRCCGYSIHYTPHITIAIFFHLFGCYWATQFFIASSATVIAGSVASYYWAQGEASPEIPFLPVFASMKRLARYNLGSVALGSLIVSFVESVRFILEAIRRKTKVSGTIPDHWFWRMAHYTSRGCLKSVEWTIKSVNRNAYIMIAITGKSFCKSSAIATELIISNILRIGKVNVIGDVILFLGKLCVSLFSALFGFLMLDSHRYRASHNKVSSPLLPVLACWALGYIVATLFFAVVEMSIDTIILSFCQDSEENQGNAQHAPPLLLETLDSNQEEEVQSLTH</sequence>
<evidence type="ECO:0000255" key="1"/>
<evidence type="ECO:0000255" key="2">
    <source>
        <dbReference type="PROSITE-ProRule" id="PRU00498"/>
    </source>
</evidence>
<evidence type="ECO:0000269" key="3">
    <source>
    </source>
</evidence>
<evidence type="ECO:0000269" key="4">
    <source>
    </source>
</evidence>
<evidence type="ECO:0000269" key="5">
    <source>
    </source>
</evidence>
<evidence type="ECO:0000269" key="6">
    <source>
    </source>
</evidence>
<evidence type="ECO:0000303" key="7">
    <source>
    </source>
</evidence>
<evidence type="ECO:0000303" key="8">
    <source>
    </source>
</evidence>
<evidence type="ECO:0000305" key="9"/>
<evidence type="ECO:0000312" key="10">
    <source>
        <dbReference type="Araport" id="AT3G15380"/>
    </source>
</evidence>
<evidence type="ECO:0000312" key="11">
    <source>
        <dbReference type="EMBL" id="AAF35404.1"/>
    </source>
</evidence>
<dbReference type="EMBL" id="AB022218">
    <property type="protein sequence ID" value="BAB02367.1"/>
    <property type="status" value="ALT_SEQ"/>
    <property type="molecule type" value="Genomic_DNA"/>
</dbReference>
<dbReference type="EMBL" id="AC024081">
    <property type="protein sequence ID" value="AAF35404.1"/>
    <property type="status" value="ALT_SEQ"/>
    <property type="molecule type" value="Genomic_DNA"/>
</dbReference>
<dbReference type="EMBL" id="CP002686">
    <property type="protein sequence ID" value="AEE75661.1"/>
    <property type="molecule type" value="Genomic_DNA"/>
</dbReference>
<dbReference type="EMBL" id="AY045917">
    <property type="protein sequence ID" value="AAK76591.1"/>
    <property type="molecule type" value="mRNA"/>
</dbReference>
<dbReference type="EMBL" id="BT001974">
    <property type="protein sequence ID" value="AAN71973.1"/>
    <property type="molecule type" value="mRNA"/>
</dbReference>
<dbReference type="RefSeq" id="NP_566511.1">
    <property type="nucleotide sequence ID" value="NM_112406.5"/>
</dbReference>
<dbReference type="SMR" id="Q94AN2"/>
<dbReference type="FunCoup" id="Q94AN2">
    <property type="interactions" value="1177"/>
</dbReference>
<dbReference type="STRING" id="3702.Q94AN2"/>
<dbReference type="TCDB" id="2.A.92.1.10">
    <property type="family name" value="the choline transporter-like (ctl) family"/>
</dbReference>
<dbReference type="GlyCosmos" id="Q94AN2">
    <property type="glycosylation" value="3 sites, No reported glycans"/>
</dbReference>
<dbReference type="GlyGen" id="Q94AN2">
    <property type="glycosylation" value="3 sites"/>
</dbReference>
<dbReference type="SwissPalm" id="Q94AN2"/>
<dbReference type="PaxDb" id="3702-AT3G15380.1"/>
<dbReference type="ProteomicsDB" id="220475"/>
<dbReference type="EnsemblPlants" id="AT3G15380.1">
    <property type="protein sequence ID" value="AT3G15380.1"/>
    <property type="gene ID" value="AT3G15380"/>
</dbReference>
<dbReference type="GeneID" id="820777"/>
<dbReference type="Gramene" id="AT3G15380.1">
    <property type="protein sequence ID" value="AT3G15380.1"/>
    <property type="gene ID" value="AT3G15380"/>
</dbReference>
<dbReference type="KEGG" id="ath:AT3G15380"/>
<dbReference type="Araport" id="AT3G15380"/>
<dbReference type="TAIR" id="AT3G15380">
    <property type="gene designation" value="CHER1"/>
</dbReference>
<dbReference type="eggNOG" id="KOG1362">
    <property type="taxonomic scope" value="Eukaryota"/>
</dbReference>
<dbReference type="HOGENOM" id="CLU_017181_3_0_1"/>
<dbReference type="InParanoid" id="Q94AN2"/>
<dbReference type="OMA" id="LLGIRYM"/>
<dbReference type="PhylomeDB" id="Q94AN2"/>
<dbReference type="PRO" id="PR:Q94AN2"/>
<dbReference type="Proteomes" id="UP000006548">
    <property type="component" value="Chromosome 3"/>
</dbReference>
<dbReference type="ExpressionAtlas" id="Q94AN2">
    <property type="expression patterns" value="baseline and differential"/>
</dbReference>
<dbReference type="GO" id="GO:0005856">
    <property type="term" value="C:cytoskeleton"/>
    <property type="evidence" value="ECO:0007669"/>
    <property type="project" value="UniProtKB-KW"/>
</dbReference>
<dbReference type="GO" id="GO:0031901">
    <property type="term" value="C:early endosome membrane"/>
    <property type="evidence" value="ECO:0000314"/>
    <property type="project" value="UniProtKB"/>
</dbReference>
<dbReference type="GO" id="GO:0009524">
    <property type="term" value="C:phragmoplast"/>
    <property type="evidence" value="ECO:0000314"/>
    <property type="project" value="TAIR"/>
</dbReference>
<dbReference type="GO" id="GO:0009705">
    <property type="term" value="C:plant-type vacuole membrane"/>
    <property type="evidence" value="ECO:0000314"/>
    <property type="project" value="UniProtKB"/>
</dbReference>
<dbReference type="GO" id="GO:0005886">
    <property type="term" value="C:plasma membrane"/>
    <property type="evidence" value="ECO:0000314"/>
    <property type="project" value="UniProtKB"/>
</dbReference>
<dbReference type="GO" id="GO:0009506">
    <property type="term" value="C:plasmodesma"/>
    <property type="evidence" value="ECO:0007005"/>
    <property type="project" value="TAIR"/>
</dbReference>
<dbReference type="GO" id="GO:0009551">
    <property type="term" value="C:secondary plasmodesma"/>
    <property type="evidence" value="ECO:0000315"/>
    <property type="project" value="UniProtKB"/>
</dbReference>
<dbReference type="GO" id="GO:0097218">
    <property type="term" value="C:sieve plate"/>
    <property type="evidence" value="ECO:0000314"/>
    <property type="project" value="TAIR"/>
</dbReference>
<dbReference type="GO" id="GO:0055044">
    <property type="term" value="C:symplast"/>
    <property type="evidence" value="ECO:0000315"/>
    <property type="project" value="UniProtKB"/>
</dbReference>
<dbReference type="GO" id="GO:0005802">
    <property type="term" value="C:trans-Golgi network"/>
    <property type="evidence" value="ECO:0000314"/>
    <property type="project" value="TAIR"/>
</dbReference>
<dbReference type="GO" id="GO:0032588">
    <property type="term" value="C:trans-Golgi network membrane"/>
    <property type="evidence" value="ECO:0000314"/>
    <property type="project" value="UniProtKB"/>
</dbReference>
<dbReference type="GO" id="GO:0015220">
    <property type="term" value="F:choline transmembrane transporter activity"/>
    <property type="evidence" value="ECO:0000314"/>
    <property type="project" value="TAIR"/>
</dbReference>
<dbReference type="GO" id="GO:0015871">
    <property type="term" value="P:choline transport"/>
    <property type="evidence" value="ECO:0000314"/>
    <property type="project" value="TAIR"/>
</dbReference>
<dbReference type="GO" id="GO:0006897">
    <property type="term" value="P:endocytosis"/>
    <property type="evidence" value="ECO:0007669"/>
    <property type="project" value="UniProtKB-KW"/>
</dbReference>
<dbReference type="GO" id="GO:0048366">
    <property type="term" value="P:leaf development"/>
    <property type="evidence" value="ECO:0000315"/>
    <property type="project" value="UniProtKB"/>
</dbReference>
<dbReference type="GO" id="GO:0055088">
    <property type="term" value="P:lipid homeostasis"/>
    <property type="evidence" value="ECO:0000315"/>
    <property type="project" value="UniProtKB"/>
</dbReference>
<dbReference type="GO" id="GO:0050801">
    <property type="term" value="P:monoatomic ion homeostasis"/>
    <property type="evidence" value="ECO:0000315"/>
    <property type="project" value="UniProtKB"/>
</dbReference>
<dbReference type="GO" id="GO:0010088">
    <property type="term" value="P:phloem development"/>
    <property type="evidence" value="ECO:0000315"/>
    <property type="project" value="TAIR"/>
</dbReference>
<dbReference type="GO" id="GO:0009663">
    <property type="term" value="P:plasmodesma organization"/>
    <property type="evidence" value="ECO:0000315"/>
    <property type="project" value="UniProtKB"/>
</dbReference>
<dbReference type="GO" id="GO:0010497">
    <property type="term" value="P:plasmodesmata-mediated intercellular transport"/>
    <property type="evidence" value="ECO:0000315"/>
    <property type="project" value="UniProtKB"/>
</dbReference>
<dbReference type="GO" id="GO:0010067">
    <property type="term" value="P:procambium histogenesis"/>
    <property type="evidence" value="ECO:0000315"/>
    <property type="project" value="UniProtKB"/>
</dbReference>
<dbReference type="GO" id="GO:0015031">
    <property type="term" value="P:protein transport"/>
    <property type="evidence" value="ECO:0000315"/>
    <property type="project" value="UniProtKB"/>
</dbReference>
<dbReference type="GO" id="GO:2000012">
    <property type="term" value="P:regulation of auxin polar transport"/>
    <property type="evidence" value="ECO:0000315"/>
    <property type="project" value="UniProtKB"/>
</dbReference>
<dbReference type="GO" id="GO:0030100">
    <property type="term" value="P:regulation of endocytosis"/>
    <property type="evidence" value="ECO:0000315"/>
    <property type="project" value="UniProtKB"/>
</dbReference>
<dbReference type="GO" id="GO:0051510">
    <property type="term" value="P:regulation of unidimensional cell growth"/>
    <property type="evidence" value="ECO:0000315"/>
    <property type="project" value="UniProtKB"/>
</dbReference>
<dbReference type="GO" id="GO:0048364">
    <property type="term" value="P:root development"/>
    <property type="evidence" value="ECO:0000315"/>
    <property type="project" value="UniProtKB"/>
</dbReference>
<dbReference type="GO" id="GO:0090603">
    <property type="term" value="P:sieve element differentiation"/>
    <property type="evidence" value="ECO:0000315"/>
    <property type="project" value="TAIR"/>
</dbReference>
<dbReference type="GO" id="GO:0016192">
    <property type="term" value="P:vesicle-mediated transport"/>
    <property type="evidence" value="ECO:0000315"/>
    <property type="project" value="UniProtKB"/>
</dbReference>
<dbReference type="GO" id="GO:0010051">
    <property type="term" value="P:xylem and phloem pattern formation"/>
    <property type="evidence" value="ECO:0000315"/>
    <property type="project" value="TAIR"/>
</dbReference>
<dbReference type="InterPro" id="IPR007603">
    <property type="entry name" value="Choline_transptr-like"/>
</dbReference>
<dbReference type="PANTHER" id="PTHR12385">
    <property type="entry name" value="CHOLINE TRANSPORTER-LIKE (SLC FAMILY 44)"/>
    <property type="match status" value="1"/>
</dbReference>
<dbReference type="PANTHER" id="PTHR12385:SF14">
    <property type="entry name" value="CHOLINE TRANSPORTER-LIKE 2"/>
    <property type="match status" value="1"/>
</dbReference>
<dbReference type="Pfam" id="PF04515">
    <property type="entry name" value="Choline_transpo"/>
    <property type="match status" value="1"/>
</dbReference>
<protein>
    <recommendedName>
        <fullName evidence="7">Choline transporter protein 1</fullName>
        <shortName evidence="7">AtCTL1</shortName>
    </recommendedName>
    <alternativeName>
        <fullName evidence="8">Protein SIGNIFICANT IONOME CHANGES 1</fullName>
    </alternativeName>
</protein>
<reference key="1">
    <citation type="journal article" date="2000" name="DNA Res.">
        <title>Structural analysis of Arabidopsis thaliana chromosome 3. I. Sequence features of the regions of 4,504,864 bp covered by sixty P1 and TAC clones.</title>
        <authorList>
            <person name="Sato S."/>
            <person name="Nakamura Y."/>
            <person name="Kaneko T."/>
            <person name="Katoh T."/>
            <person name="Asamizu E."/>
            <person name="Tabata S."/>
        </authorList>
    </citation>
    <scope>NUCLEOTIDE SEQUENCE [LARGE SCALE GENOMIC DNA]</scope>
    <source>
        <strain>cv. Columbia</strain>
    </source>
</reference>
<reference key="2">
    <citation type="journal article" date="2000" name="Nature">
        <title>Sequence and analysis of chromosome 3 of the plant Arabidopsis thaliana.</title>
        <authorList>
            <person name="Salanoubat M."/>
            <person name="Lemcke K."/>
            <person name="Rieger M."/>
            <person name="Ansorge W."/>
            <person name="Unseld M."/>
            <person name="Fartmann B."/>
            <person name="Valle G."/>
            <person name="Bloecker H."/>
            <person name="Perez-Alonso M."/>
            <person name="Obermaier B."/>
            <person name="Delseny M."/>
            <person name="Boutry M."/>
            <person name="Grivell L.A."/>
            <person name="Mache R."/>
            <person name="Puigdomenech P."/>
            <person name="De Simone V."/>
            <person name="Choisne N."/>
            <person name="Artiguenave F."/>
            <person name="Robert C."/>
            <person name="Brottier P."/>
            <person name="Wincker P."/>
            <person name="Cattolico L."/>
            <person name="Weissenbach J."/>
            <person name="Saurin W."/>
            <person name="Quetier F."/>
            <person name="Schaefer M."/>
            <person name="Mueller-Auer S."/>
            <person name="Gabel C."/>
            <person name="Fuchs M."/>
            <person name="Benes V."/>
            <person name="Wurmbach E."/>
            <person name="Drzonek H."/>
            <person name="Erfle H."/>
            <person name="Jordan N."/>
            <person name="Bangert S."/>
            <person name="Wiedelmann R."/>
            <person name="Kranz H."/>
            <person name="Voss H."/>
            <person name="Holland R."/>
            <person name="Brandt P."/>
            <person name="Nyakatura G."/>
            <person name="Vezzi A."/>
            <person name="D'Angelo M."/>
            <person name="Pallavicini A."/>
            <person name="Toppo S."/>
            <person name="Simionati B."/>
            <person name="Conrad A."/>
            <person name="Hornischer K."/>
            <person name="Kauer G."/>
            <person name="Loehnert T.-H."/>
            <person name="Nordsiek G."/>
            <person name="Reichelt J."/>
            <person name="Scharfe M."/>
            <person name="Schoen O."/>
            <person name="Bargues M."/>
            <person name="Terol J."/>
            <person name="Climent J."/>
            <person name="Navarro P."/>
            <person name="Collado C."/>
            <person name="Perez-Perez A."/>
            <person name="Ottenwaelder B."/>
            <person name="Duchemin D."/>
            <person name="Cooke R."/>
            <person name="Laudie M."/>
            <person name="Berger-Llauro C."/>
            <person name="Purnelle B."/>
            <person name="Masuy D."/>
            <person name="de Haan M."/>
            <person name="Maarse A.C."/>
            <person name="Alcaraz J.-P."/>
            <person name="Cottet A."/>
            <person name="Casacuberta E."/>
            <person name="Monfort A."/>
            <person name="Argiriou A."/>
            <person name="Flores M."/>
            <person name="Liguori R."/>
            <person name="Vitale D."/>
            <person name="Mannhaupt G."/>
            <person name="Haase D."/>
            <person name="Schoof H."/>
            <person name="Rudd S."/>
            <person name="Zaccaria P."/>
            <person name="Mewes H.-W."/>
            <person name="Mayer K.F.X."/>
            <person name="Kaul S."/>
            <person name="Town C.D."/>
            <person name="Koo H.L."/>
            <person name="Tallon L.J."/>
            <person name="Jenkins J."/>
            <person name="Rooney T."/>
            <person name="Rizzo M."/>
            <person name="Walts A."/>
            <person name="Utterback T."/>
            <person name="Fujii C.Y."/>
            <person name="Shea T.P."/>
            <person name="Creasy T.H."/>
            <person name="Haas B."/>
            <person name="Maiti R."/>
            <person name="Wu D."/>
            <person name="Peterson J."/>
            <person name="Van Aken S."/>
            <person name="Pai G."/>
            <person name="Militscher J."/>
            <person name="Sellers P."/>
            <person name="Gill J.E."/>
            <person name="Feldblyum T.V."/>
            <person name="Preuss D."/>
            <person name="Lin X."/>
            <person name="Nierman W.C."/>
            <person name="Salzberg S.L."/>
            <person name="White O."/>
            <person name="Venter J.C."/>
            <person name="Fraser C.M."/>
            <person name="Kaneko T."/>
            <person name="Nakamura Y."/>
            <person name="Sato S."/>
            <person name="Kato T."/>
            <person name="Asamizu E."/>
            <person name="Sasamoto S."/>
            <person name="Kimura T."/>
            <person name="Idesawa K."/>
            <person name="Kawashima K."/>
            <person name="Kishida Y."/>
            <person name="Kiyokawa C."/>
            <person name="Kohara M."/>
            <person name="Matsumoto M."/>
            <person name="Matsuno A."/>
            <person name="Muraki A."/>
            <person name="Nakayama S."/>
            <person name="Nakazaki N."/>
            <person name="Shinpo S."/>
            <person name="Takeuchi C."/>
            <person name="Wada T."/>
            <person name="Watanabe A."/>
            <person name="Yamada M."/>
            <person name="Yasuda M."/>
            <person name="Tabata S."/>
        </authorList>
    </citation>
    <scope>NUCLEOTIDE SEQUENCE [LARGE SCALE GENOMIC DNA]</scope>
    <source>
        <strain>cv. Columbia</strain>
    </source>
</reference>
<reference key="3">
    <citation type="journal article" date="2017" name="Plant J.">
        <title>Araport11: a complete reannotation of the Arabidopsis thaliana reference genome.</title>
        <authorList>
            <person name="Cheng C.Y."/>
            <person name="Krishnakumar V."/>
            <person name="Chan A.P."/>
            <person name="Thibaud-Nissen F."/>
            <person name="Schobel S."/>
            <person name="Town C.D."/>
        </authorList>
    </citation>
    <scope>GENOME REANNOTATION</scope>
    <source>
        <strain>cv. Columbia</strain>
    </source>
</reference>
<reference key="4">
    <citation type="journal article" date="2003" name="Science">
        <title>Empirical analysis of transcriptional activity in the Arabidopsis genome.</title>
        <authorList>
            <person name="Yamada K."/>
            <person name="Lim J."/>
            <person name="Dale J.M."/>
            <person name="Chen H."/>
            <person name="Shinn P."/>
            <person name="Palm C.J."/>
            <person name="Southwick A.M."/>
            <person name="Wu H.C."/>
            <person name="Kim C.J."/>
            <person name="Nguyen M."/>
            <person name="Pham P.K."/>
            <person name="Cheuk R.F."/>
            <person name="Karlin-Newmann G."/>
            <person name="Liu S.X."/>
            <person name="Lam B."/>
            <person name="Sakano H."/>
            <person name="Wu T."/>
            <person name="Yu G."/>
            <person name="Miranda M."/>
            <person name="Quach H.L."/>
            <person name="Tripp M."/>
            <person name="Chang C.H."/>
            <person name="Lee J.M."/>
            <person name="Toriumi M.J."/>
            <person name="Chan M.M."/>
            <person name="Tang C.C."/>
            <person name="Onodera C.S."/>
            <person name="Deng J.M."/>
            <person name="Akiyama K."/>
            <person name="Ansari Y."/>
            <person name="Arakawa T."/>
            <person name="Banh J."/>
            <person name="Banno F."/>
            <person name="Bowser L."/>
            <person name="Brooks S.Y."/>
            <person name="Carninci P."/>
            <person name="Chao Q."/>
            <person name="Choy N."/>
            <person name="Enju A."/>
            <person name="Goldsmith A.D."/>
            <person name="Gurjal M."/>
            <person name="Hansen N.F."/>
            <person name="Hayashizaki Y."/>
            <person name="Johnson-Hopson C."/>
            <person name="Hsuan V.W."/>
            <person name="Iida K."/>
            <person name="Karnes M."/>
            <person name="Khan S."/>
            <person name="Koesema E."/>
            <person name="Ishida J."/>
            <person name="Jiang P.X."/>
            <person name="Jones T."/>
            <person name="Kawai J."/>
            <person name="Kamiya A."/>
            <person name="Meyers C."/>
            <person name="Nakajima M."/>
            <person name="Narusaka M."/>
            <person name="Seki M."/>
            <person name="Sakurai T."/>
            <person name="Satou M."/>
            <person name="Tamse R."/>
            <person name="Vaysberg M."/>
            <person name="Wallender E.K."/>
            <person name="Wong C."/>
            <person name="Yamamura Y."/>
            <person name="Yuan S."/>
            <person name="Shinozaki K."/>
            <person name="Davis R.W."/>
            <person name="Theologis A."/>
            <person name="Ecker J.R."/>
        </authorList>
    </citation>
    <scope>NUCLEOTIDE SEQUENCE [LARGE SCALE MRNA]</scope>
    <source>
        <strain>cv. Columbia</strain>
    </source>
</reference>
<reference key="5">
    <citation type="journal article" date="2014" name="Nat. Commun.">
        <title>CHOLINE TRANSPORTER-LIKE1 is required for sieve plate development to mediate long-distance cell-to-cell communication.</title>
        <authorList>
            <person name="Dettmer J."/>
            <person name="Ursache R."/>
            <person name="Campilho A."/>
            <person name="Miyashima S."/>
            <person name="Belevich I."/>
            <person name="O'Regan S."/>
            <person name="Mullendore D.L."/>
            <person name="Yadav S.R."/>
            <person name="Lanz C."/>
            <person name="Beverina L."/>
            <person name="Papagni A."/>
            <person name="Schneeberger K."/>
            <person name="Weigel D."/>
            <person name="Stierhof Y.D."/>
            <person name="Moritz T."/>
            <person name="Knoblauch M."/>
            <person name="Jokitalo E."/>
            <person name="Helariutta Y."/>
        </authorList>
    </citation>
    <scope>FUNCTION</scope>
    <scope>DISRUPTION PHENOTYPE</scope>
    <scope>SUBCELLULAR LOCATION</scope>
    <source>
        <strain>cv. Columbia</strain>
    </source>
</reference>
<reference key="6">
    <citation type="journal article" date="2017" name="Plant J.">
        <title>Choline transporter-like1 (CHER1) is crucial for plasmodesmata maturation in Arabidopsis thaliana.</title>
        <authorList>
            <person name="Kraner M.E."/>
            <person name="Link K."/>
            <person name="Melzer M."/>
            <person name="Ekici A.B."/>
            <person name="Uebe S."/>
            <person name="Tarazona P."/>
            <person name="Feussner I."/>
            <person name="Hofmann J."/>
            <person name="Sonnewald U."/>
        </authorList>
    </citation>
    <scope>FUNCTION</scope>
    <scope>DISRUPTION PHENOTYPE</scope>
    <scope>MUTAGENESIS OF GLY-247</scope>
    <scope>SUBCELLULAR LOCATION</scope>
    <source>
        <strain>cv. Columbia</strain>
    </source>
</reference>
<reference key="7">
    <citation type="journal article" date="2017" name="PLoS Biol.">
        <title>A new vesicle trafficking regulator CTL1 plays a crucial role in ion homeostasis.</title>
        <authorList>
            <person name="Gao Y.-Q."/>
            <person name="Chen J.-G."/>
            <person name="Chen Z.-R."/>
            <person name="An D."/>
            <person name="Lv Q.-Y."/>
            <person name="Han M.-L."/>
            <person name="Wang Y.-L."/>
            <person name="Salt D.E."/>
            <person name="Chao D.-Y."/>
        </authorList>
    </citation>
    <scope>FUNCTION</scope>
    <scope>DISRUPTION PHENOTYPE</scope>
    <scope>MUTAGENESIS OF GLY-247</scope>
    <scope>TISSUE SPECIFICITY</scope>
    <scope>DEVELOPMENTAL STAGE</scope>
    <source>
        <strain>cv. Columbia</strain>
    </source>
</reference>
<reference key="8">
    <citation type="journal article" date="2017" name="PLoS Biol.">
        <title>Arabidopsis choline transporter-like 1 (CTL1) regulates secretory trafficking of auxin transporters to control seedling growth.</title>
        <authorList>
            <person name="Wang Y."/>
            <person name="Yang L."/>
            <person name="Tang Y."/>
            <person name="Tang R."/>
            <person name="Jing Y."/>
            <person name="Zhang C."/>
            <person name="Zhang B."/>
            <person name="Li X."/>
            <person name="Cui Y."/>
            <person name="Zhang C."/>
            <person name="Shi J."/>
            <person name="Zhao F."/>
            <person name="Lan W."/>
            <person name="Luan S."/>
        </authorList>
    </citation>
    <scope>FUNCTION</scope>
    <scope>DISRUPTION PHENOTYPE</scope>
    <scope>TISSUE SPECIFICITY</scope>
    <scope>DEVELOPMENTAL STAGE</scope>
    <scope>SUBCELLULAR LOCATION</scope>
    <source>
        <strain>cv. Columbia</strain>
    </source>
</reference>
<accession>Q94AN2</accession>
<accession>Q9LUQ4</accession>
<accession>Q9M7X1</accession>
<name>CHER1_ARATH</name>
<comment type="function">
    <text evidence="3 4 5 6">Regulator of vesicle trafficking, including endocytosis. Necessary for secondary plasmodesmata (PD) formation and development via the secretory trafficking regulation of proteins required for PD development, thus influencing intercellular communication (PubMed:27743414, PubMed:29284002). Modulates ion homeostasis, especially in roots, by monitoring the transport and subsequent subcellular localization of some ion transporters (PubMed:29284002). Choline transporter involved in the regulation of choline metabolite homeostasis during root and phloem development (PubMed:25008948). Modulates phloem morphogenesis and conductivity (PubMed:25008948). Required for procambium maintenance and sieve plate development (e.g. sieve plate and sieve pore elaboration) to mediate long-distance cell-to-cell communication via symplastic transport through the phloem (PubMed:25008948). Involved in the regulation of intracellular trafficking of PIN-type auxin transporters (e.g. PIN1 and PIN3), a process controlling seedling growth, apical dominance, cell elongation and apical hook development. Also modulates membrane lipids (e.g. phospholipids and sphingolipids) homeostasis (PubMed:29283991).</text>
</comment>
<comment type="function">
    <text evidence="4">(Microbial infection) Required for PD localization of MP17, the luteoviral movement protein.</text>
</comment>
<comment type="subcellular location">
    <subcellularLocation>
        <location evidence="4">Early endosome membrane</location>
        <topology evidence="1">Multi-pass membrane protein</topology>
    </subcellularLocation>
    <subcellularLocation>
        <location evidence="3 4 5">Golgi apparatus</location>
        <location evidence="3 4 5">trans-Golgi network membrane</location>
        <topology evidence="1">Multi-pass membrane protein</topology>
    </subcellularLocation>
    <subcellularLocation>
        <location evidence="3">Cytoplasm</location>
        <location evidence="3">Cytoskeleton</location>
        <location evidence="3">Phragmoplast</location>
    </subcellularLocation>
    <subcellularLocation>
        <location evidence="5">Prevacuolar compartment membrane</location>
        <topology evidence="1">Multi-pass membrane protein</topology>
    </subcellularLocation>
    <subcellularLocation>
        <location evidence="5">Cell membrane</location>
        <topology evidence="1">Multi-pass membrane protein</topology>
    </subcellularLocation>
    <text evidence="3">Associated transiently with the phragmoplast during cytokinesis. Follows a polar localization in the forming sieve plates.</text>
</comment>
<comment type="tissue specificity">
    <text evidence="5 6">Expressed in both roots and shoots.</text>
</comment>
<comment type="developmental stage">
    <text evidence="5 6">In roots, observed in all cells of the root tip, inculding both meristem and elongation zones, but restricted to vascular tissues of the maturation zone (PubMed:29283991, PubMed:29284002). Also observed in shoot apical meristems, lateral root primordia and the vascular system. Under dark conditions, present in the concave side of the apical hook (PubMed:29283991).</text>
</comment>
<comment type="disruption phenotype">
    <text evidence="3 4 5 6">Impaired plasmodesmata (PD) mediated cell-to-cell communication (PubMed:29284002). Altered choline metabolite profile. Several phenotypic abnormalities (e.g. dwarf with defects in both shoot and root architecture), including reduced pore density and altered pore structure in the sieve areas, associated with defective symplastic transport through phloem. Increased number of sieve elements (SE)-like cells instead of two companion cells (CCs) and two SEs. Defects in procambium maintenance and phloem patterning. Abnormal retaining of desmotubules in the symplastic space in sieve pores (PubMed:25008948). In cher1-4, impaired secondary plasmodesmata (PD) formation and development leading to starch and soluble sugars excess accumulation, and stunted growth. Altered PD localization of the luteoviral movement protein MP17. Reduced level of choline and phosphocholine (PubMed:27743414). Altered ion profile due to both PD defects and ion transporter misregulation. Increased leaf concentrations of sodium (Na), lithium (Li), boron (B) ions, and decreased leaf concentrations of phosphorus (P), potassium (K), calcium (Ca), cobalt (Co), nickel (Ni), and copper (Cu), manganese (Mn), iron (Fe), zinc (Zn) and molybdenum (Mo) ions. Defects in leaf and root elongation as well as fewer leaves are also observed, associated with irregular cell organization in roots, probably as a result of irregular cell division (PubMed:29284002). Impaired intracellular trafficking of PIN-type auxin transporters (e.g. PIN1 and PIN3) to the plasma membrane, resulting in abnormal seedling growth, lack of apical dominance, cell elongation defect and apical hook development. Perturbated membrane lipids (e.g. phospholipids and sphingolipids) homeostasis. Reduced sensitivity to auxin (e.g. 1-naphthylacetic acid, NAA) (PubMed:29283991).</text>
</comment>
<comment type="similarity">
    <text evidence="9">Belongs to the CTL (choline transporter-like) family.</text>
</comment>
<comment type="sequence caution" evidence="9">
    <conflict type="erroneous gene model prediction">
        <sequence resource="EMBL-CDS" id="AAF35404"/>
    </conflict>
</comment>
<comment type="sequence caution" evidence="9">
    <conflict type="erroneous gene model prediction">
        <sequence resource="EMBL-CDS" id="BAB02367"/>
    </conflict>
</comment>